<protein>
    <recommendedName>
        <fullName>Uncharacterized 14.4 kDa protein</fullName>
    </recommendedName>
</protein>
<organismHost>
    <name type="scientific">Galliformes</name>
    <dbReference type="NCBI Taxonomy" id="8976"/>
</organismHost>
<organism>
    <name type="scientific">Fowl adenovirus A serotype 1 (strain CELO / Phelps)</name>
    <name type="common">FAdV-1</name>
    <name type="synonym">Avian adenovirus gal1 (strain Phelps)</name>
    <dbReference type="NCBI Taxonomy" id="10553"/>
    <lineage>
        <taxon>Viruses</taxon>
        <taxon>Varidnaviria</taxon>
        <taxon>Bamfordvirae</taxon>
        <taxon>Preplasmiviricota</taxon>
        <taxon>Tectiliviricetes</taxon>
        <taxon>Rowavirales</taxon>
        <taxon>Adenoviridae</taxon>
        <taxon>Aviadenovirus</taxon>
        <taxon>Fowl aviadenovirus A</taxon>
    </lineage>
</organism>
<accession>P20745</accession>
<name>Y144_ADEG1</name>
<sequence length="126" mass="14433">LTPIISVQFKPPPTRDFPVVVEKGFEKRAHYFRGFINSGHAQIQKGQTHHHGHMTFAWRQGLDTDTIRHRILNVHIGPCIYSVPPPLDRSHESPEEFFPPQNRNRGGGPKAQIQRHPPEALEKTTH</sequence>
<dbReference type="EMBL" id="X17217">
    <property type="protein sequence ID" value="CAA35091.1"/>
    <property type="molecule type" value="Genomic_DNA"/>
</dbReference>
<dbReference type="PIR" id="S10009">
    <property type="entry name" value="S10009"/>
</dbReference>
<evidence type="ECO:0000256" key="1">
    <source>
        <dbReference type="SAM" id="MobiDB-lite"/>
    </source>
</evidence>
<proteinExistence type="predicted"/>
<feature type="chain" id="PRO_0000221939" description="Uncharacterized 14.4 kDa protein">
    <location>
        <begin position="1" status="less than"/>
        <end position="126"/>
    </location>
</feature>
<feature type="region of interest" description="Disordered" evidence="1">
    <location>
        <begin position="83"/>
        <end position="126"/>
    </location>
</feature>
<feature type="compositionally biased region" description="Basic and acidic residues" evidence="1">
    <location>
        <begin position="116"/>
        <end position="126"/>
    </location>
</feature>
<feature type="non-terminal residue">
    <location>
        <position position="1"/>
    </location>
</feature>
<reference key="1">
    <citation type="journal article" date="1990" name="Nucleic Acids Res.">
        <title>Sequence of an avian adenovirus (CELO) DNA fragment (0-11.2%).</title>
        <authorList>
            <person name="Akopian T.A."/>
            <person name="Kruglyak V.A."/>
            <person name="Rivkina M.B."/>
            <person name="Naroditsky B.S."/>
            <person name="Tikhonenko T.I."/>
        </authorList>
    </citation>
    <scope>NUCLEOTIDE SEQUENCE [GENOMIC DNA]</scope>
</reference>